<evidence type="ECO:0000250" key="1"/>
<evidence type="ECO:0000255" key="2"/>
<evidence type="ECO:0000256" key="3">
    <source>
        <dbReference type="SAM" id="MobiDB-lite"/>
    </source>
</evidence>
<evidence type="ECO:0000269" key="4">
    <source>
    </source>
</evidence>
<evidence type="ECO:0000269" key="5">
    <source>
    </source>
</evidence>
<evidence type="ECO:0000303" key="6">
    <source>
    </source>
</evidence>
<evidence type="ECO:0000305" key="7"/>
<evidence type="ECO:0000305" key="8">
    <source>
    </source>
</evidence>
<evidence type="ECO:0000312" key="9">
    <source>
        <dbReference type="MGI" id="MGI:3040688"/>
    </source>
</evidence>
<evidence type="ECO:0007744" key="10">
    <source>
    </source>
</evidence>
<keyword id="KW-0029">Amino-acid transport</keyword>
<keyword id="KW-0325">Glycoprotein</keyword>
<keyword id="KW-0458">Lysosome</keyword>
<keyword id="KW-0472">Membrane</keyword>
<keyword id="KW-0597">Phosphoprotein</keyword>
<keyword id="KW-1185">Reference proteome</keyword>
<keyword id="KW-0812">Transmembrane</keyword>
<keyword id="KW-1133">Transmembrane helix</keyword>
<keyword id="KW-0813">Transport</keyword>
<accession>Q8BXR1</accession>
<accession>Q69ZE9</accession>
<organism>
    <name type="scientific">Mus musculus</name>
    <name type="common">Mouse</name>
    <dbReference type="NCBI Taxonomy" id="10090"/>
    <lineage>
        <taxon>Eukaryota</taxon>
        <taxon>Metazoa</taxon>
        <taxon>Chordata</taxon>
        <taxon>Craniata</taxon>
        <taxon>Vertebrata</taxon>
        <taxon>Euteleostomi</taxon>
        <taxon>Mammalia</taxon>
        <taxon>Eutheria</taxon>
        <taxon>Euarchontoglires</taxon>
        <taxon>Glires</taxon>
        <taxon>Rodentia</taxon>
        <taxon>Myomorpha</taxon>
        <taxon>Muroidea</taxon>
        <taxon>Muridae</taxon>
        <taxon>Murinae</taxon>
        <taxon>Mus</taxon>
        <taxon>Mus</taxon>
    </lineage>
</organism>
<feature type="chain" id="PRO_0000307361" description="Solute carrier family 7 member 14">
    <location>
        <begin position="1"/>
        <end position="771"/>
    </location>
</feature>
<feature type="transmembrane region" description="Helical" evidence="2">
    <location>
        <begin position="58"/>
        <end position="78"/>
    </location>
</feature>
<feature type="transmembrane region" description="Helical" evidence="2">
    <location>
        <begin position="83"/>
        <end position="103"/>
    </location>
</feature>
<feature type="transmembrane region" description="Helical" evidence="2">
    <location>
        <begin position="119"/>
        <end position="141"/>
    </location>
</feature>
<feature type="transmembrane region" description="Helical" evidence="2">
    <location>
        <begin position="187"/>
        <end position="207"/>
    </location>
</feature>
<feature type="transmembrane region" description="Helical" evidence="2">
    <location>
        <begin position="216"/>
        <end position="236"/>
    </location>
</feature>
<feature type="transmembrane region" description="Helical" evidence="2">
    <location>
        <begin position="251"/>
        <end position="271"/>
    </location>
</feature>
<feature type="transmembrane region" description="Helical" evidence="2">
    <location>
        <begin position="291"/>
        <end position="311"/>
    </location>
</feature>
<feature type="transmembrane region" description="Helical" evidence="2">
    <location>
        <begin position="336"/>
        <end position="356"/>
    </location>
</feature>
<feature type="transmembrane region" description="Helical" evidence="2">
    <location>
        <begin position="384"/>
        <end position="404"/>
    </location>
</feature>
<feature type="transmembrane region" description="Helical" evidence="2">
    <location>
        <begin position="407"/>
        <end position="427"/>
    </location>
</feature>
<feature type="transmembrane region" description="Helical" evidence="2">
    <location>
        <begin position="565"/>
        <end position="585"/>
    </location>
</feature>
<feature type="transmembrane region" description="Helical" evidence="2">
    <location>
        <begin position="596"/>
        <end position="616"/>
    </location>
</feature>
<feature type="transmembrane region" description="Helical" evidence="2">
    <location>
        <begin position="628"/>
        <end position="648"/>
    </location>
</feature>
<feature type="transmembrane region" description="Helical" evidence="2">
    <location>
        <begin position="655"/>
        <end position="675"/>
    </location>
</feature>
<feature type="region of interest" description="Disordered" evidence="3">
    <location>
        <begin position="735"/>
        <end position="771"/>
    </location>
</feature>
<feature type="compositionally biased region" description="Basic residues" evidence="3">
    <location>
        <begin position="745"/>
        <end position="754"/>
    </location>
</feature>
<feature type="modified residue" description="Phosphoserine" evidence="10">
    <location>
        <position position="465"/>
    </location>
</feature>
<feature type="modified residue" description="Phosphoserine" evidence="10">
    <location>
        <position position="468"/>
    </location>
</feature>
<feature type="modified residue" description="Phosphoserine" evidence="10">
    <location>
        <position position="475"/>
    </location>
</feature>
<feature type="modified residue" description="Phosphoserine" evidence="10">
    <location>
        <position position="488"/>
    </location>
</feature>
<feature type="modified residue" description="Phosphoserine" evidence="10">
    <location>
        <position position="757"/>
    </location>
</feature>
<feature type="modified residue" description="Phosphoserine" evidence="10">
    <location>
        <position position="769"/>
    </location>
</feature>
<feature type="glycosylation site" description="N-linked (GlcNAc...) asparagine" evidence="2">
    <location>
        <position position="282"/>
    </location>
</feature>
<feature type="glycosylation site" description="N-linked (GlcNAc...) asparagine" evidence="2">
    <location>
        <position position="676"/>
    </location>
</feature>
<comment type="function">
    <text evidence="5">Imports 4-aminobutanoate (GABA) into lysosomes. May act as a GABA sensor that regulates mTORC2-dependent INS signaling and gluconeogenesis. The transport mechanism and substrate selectivity remain to be elucidated.</text>
</comment>
<comment type="catalytic activity">
    <reaction evidence="5">
        <text>4-aminobutanoate(in) = 4-aminobutanoate(out)</text>
        <dbReference type="Rhea" id="RHEA:35035"/>
        <dbReference type="ChEBI" id="CHEBI:59888"/>
    </reaction>
    <physiologicalReaction direction="right-to-left" evidence="8">
        <dbReference type="Rhea" id="RHEA:35037"/>
    </physiologicalReaction>
</comment>
<comment type="subcellular location">
    <subcellularLocation>
        <location evidence="5">Lysosome membrane</location>
        <topology evidence="1">Multi-pass membrane protein</topology>
    </subcellularLocation>
    <text evidence="1">Exhibits a punctated pattern in the cytoplasm, which partially ovelaps with lysosomes.</text>
</comment>
<comment type="tissue specificity">
    <text evidence="4 5">Expressed in retina, brain and spinal cord. In the retina, expressed in the inner nuclear layer and photoreceptor layer (at protein level) (PubMed:24670872). Expressed in liver, spleen, lung, kidney intestine and brain (at protein level) (PubMed:36640347).</text>
</comment>
<comment type="developmental stage">
    <text evidence="4">Detected in the eyeball at 18.5 dpc. Expression increases in the retina after birth from P4 to P90.</text>
</comment>
<comment type="induction">
    <text evidence="5">Up-regulated in liver in response to high-fat diet.</text>
</comment>
<comment type="disruption phenotype">
    <text evidence="4">Mutant mice exhibit slightly thinner retina, including outer retinal layer, and abnormal electroretinography at 2 and 6 months of age compared to wild-type animals. They are viable and fertile. They do not show any noticeable physical abnormalities.</text>
</comment>
<comment type="similarity">
    <text evidence="7">Belongs to the amino acid-polyamine-organocation (APC) superfamily.</text>
</comment>
<comment type="sequence caution" evidence="7">
    <conflict type="erroneous initiation">
        <sequence resource="EMBL-CDS" id="BAD32495"/>
    </conflict>
</comment>
<dbReference type="EMBL" id="AK173217">
    <property type="protein sequence ID" value="BAD32495.1"/>
    <property type="status" value="ALT_INIT"/>
    <property type="molecule type" value="mRNA"/>
</dbReference>
<dbReference type="EMBL" id="AK044448">
    <property type="protein sequence ID" value="BAC31925.1"/>
    <property type="molecule type" value="mRNA"/>
</dbReference>
<dbReference type="EMBL" id="BC061928">
    <property type="protein sequence ID" value="AAH61928.1"/>
    <property type="molecule type" value="mRNA"/>
</dbReference>
<dbReference type="CCDS" id="CCDS17291.1"/>
<dbReference type="RefSeq" id="NP_766449.1">
    <property type="nucleotide sequence ID" value="NM_172861.3"/>
</dbReference>
<dbReference type="RefSeq" id="XP_006535535.1">
    <property type="nucleotide sequence ID" value="XM_006535472.5"/>
</dbReference>
<dbReference type="RefSeq" id="XP_030108473.1">
    <property type="nucleotide sequence ID" value="XM_030252613.1"/>
</dbReference>
<dbReference type="SMR" id="Q8BXR1"/>
<dbReference type="FunCoup" id="Q8BXR1">
    <property type="interactions" value="610"/>
</dbReference>
<dbReference type="STRING" id="10090.ENSMUSP00000088803"/>
<dbReference type="GlyCosmos" id="Q8BXR1">
    <property type="glycosylation" value="2 sites, No reported glycans"/>
</dbReference>
<dbReference type="GlyGen" id="Q8BXR1">
    <property type="glycosylation" value="3 sites"/>
</dbReference>
<dbReference type="iPTMnet" id="Q8BXR1"/>
<dbReference type="PhosphoSitePlus" id="Q8BXR1"/>
<dbReference type="SwissPalm" id="Q8BXR1"/>
<dbReference type="PaxDb" id="10090-ENSMUSP00000088803"/>
<dbReference type="PeptideAtlas" id="Q8BXR1"/>
<dbReference type="ProteomicsDB" id="255449"/>
<dbReference type="Antibodypedia" id="18672">
    <property type="antibodies" value="54 antibodies from 18 providers"/>
</dbReference>
<dbReference type="DNASU" id="241919"/>
<dbReference type="Ensembl" id="ENSMUST00000091259.9">
    <property type="protein sequence ID" value="ENSMUSP00000088803.3"/>
    <property type="gene ID" value="ENSMUSG00000069072.10"/>
</dbReference>
<dbReference type="GeneID" id="241919"/>
<dbReference type="KEGG" id="mmu:241919"/>
<dbReference type="UCSC" id="uc008ovx.2">
    <property type="organism name" value="mouse"/>
</dbReference>
<dbReference type="AGR" id="MGI:3040688"/>
<dbReference type="CTD" id="57709"/>
<dbReference type="MGI" id="MGI:3040688">
    <property type="gene designation" value="Slc7a14"/>
</dbReference>
<dbReference type="VEuPathDB" id="HostDB:ENSMUSG00000069072"/>
<dbReference type="eggNOG" id="KOG1286">
    <property type="taxonomic scope" value="Eukaryota"/>
</dbReference>
<dbReference type="GeneTree" id="ENSGT00940000155893"/>
<dbReference type="InParanoid" id="Q8BXR1"/>
<dbReference type="OMA" id="GFVMYFY"/>
<dbReference type="OrthoDB" id="3900342at2759"/>
<dbReference type="PhylomeDB" id="Q8BXR1"/>
<dbReference type="TreeFam" id="TF315212"/>
<dbReference type="BioGRID-ORCS" id="241919">
    <property type="hits" value="4 hits in 78 CRISPR screens"/>
</dbReference>
<dbReference type="PRO" id="PR:Q8BXR1"/>
<dbReference type="Proteomes" id="UP000000589">
    <property type="component" value="Chromosome 3"/>
</dbReference>
<dbReference type="RNAct" id="Q8BXR1">
    <property type="molecule type" value="protein"/>
</dbReference>
<dbReference type="Bgee" id="ENSMUSG00000069072">
    <property type="expression patterns" value="Expressed in superior cervical ganglion and 88 other cell types or tissues"/>
</dbReference>
<dbReference type="ExpressionAtlas" id="Q8BXR1">
    <property type="expression patterns" value="baseline and differential"/>
</dbReference>
<dbReference type="GO" id="GO:0005829">
    <property type="term" value="C:cytosol"/>
    <property type="evidence" value="ECO:0007669"/>
    <property type="project" value="Ensembl"/>
</dbReference>
<dbReference type="GO" id="GO:0005765">
    <property type="term" value="C:lysosomal membrane"/>
    <property type="evidence" value="ECO:0000314"/>
    <property type="project" value="UniProtKB"/>
</dbReference>
<dbReference type="GO" id="GO:0005654">
    <property type="term" value="C:nucleoplasm"/>
    <property type="evidence" value="ECO:0007669"/>
    <property type="project" value="Ensembl"/>
</dbReference>
<dbReference type="GO" id="GO:0005886">
    <property type="term" value="C:plasma membrane"/>
    <property type="evidence" value="ECO:0007669"/>
    <property type="project" value="Ensembl"/>
</dbReference>
<dbReference type="GO" id="GO:0015185">
    <property type="term" value="F:gamma-aminobutyric acid transmembrane transporter activity"/>
    <property type="evidence" value="ECO:0000314"/>
    <property type="project" value="UniProtKB"/>
</dbReference>
<dbReference type="GO" id="GO:0051939">
    <property type="term" value="P:gamma-aminobutyric acid import"/>
    <property type="evidence" value="ECO:0000315"/>
    <property type="project" value="UniProtKB"/>
</dbReference>
<dbReference type="FunFam" id="1.20.1740.10:FF:000010">
    <property type="entry name" value="probable cationic amino acid transporter"/>
    <property type="match status" value="1"/>
</dbReference>
<dbReference type="Gene3D" id="1.20.1740.10">
    <property type="entry name" value="Amino acid/polyamine transporter I"/>
    <property type="match status" value="1"/>
</dbReference>
<dbReference type="InterPro" id="IPR002293">
    <property type="entry name" value="AA/rel_permease1"/>
</dbReference>
<dbReference type="InterPro" id="IPR029485">
    <property type="entry name" value="CAT_C"/>
</dbReference>
<dbReference type="PANTHER" id="PTHR43243:SF17">
    <property type="entry name" value="CATIONIC AMINO ACID TRANSPORTER-RELATED"/>
    <property type="match status" value="1"/>
</dbReference>
<dbReference type="PANTHER" id="PTHR43243">
    <property type="entry name" value="INNER MEMBRANE TRANSPORTER YGJI-RELATED"/>
    <property type="match status" value="1"/>
</dbReference>
<dbReference type="Pfam" id="PF13520">
    <property type="entry name" value="AA_permease_2"/>
    <property type="match status" value="1"/>
</dbReference>
<dbReference type="Pfam" id="PF13906">
    <property type="entry name" value="AA_permease_C"/>
    <property type="match status" value="1"/>
</dbReference>
<gene>
    <name evidence="6 9" type="primary">Slc7a14</name>
    <name type="synonym">Kiaa1613</name>
</gene>
<protein>
    <recommendedName>
        <fullName>Solute carrier family 7 member 14</fullName>
    </recommendedName>
    <alternativeName>
        <fullName evidence="8">Gamma-aminobutyric acid transporter SLC7A14</fullName>
    </alternativeName>
</protein>
<name>S7A14_MOUSE</name>
<reference key="1">
    <citation type="journal article" date="2004" name="DNA Res.">
        <title>Prediction of the coding sequences of mouse homologues of KIAA gene: IV. The complete nucleotide sequences of 500 mouse KIAA-homologous cDNAs identified by screening of terminal sequences of cDNA clones randomly sampled from size-fractionated libraries.</title>
        <authorList>
            <person name="Okazaki N."/>
            <person name="Kikuno R."/>
            <person name="Ohara R."/>
            <person name="Inamoto S."/>
            <person name="Koseki H."/>
            <person name="Hiraoka S."/>
            <person name="Saga Y."/>
            <person name="Seino S."/>
            <person name="Nishimura M."/>
            <person name="Kaisho T."/>
            <person name="Hoshino K."/>
            <person name="Kitamura H."/>
            <person name="Nagase T."/>
            <person name="Ohara O."/>
            <person name="Koga H."/>
        </authorList>
    </citation>
    <scope>NUCLEOTIDE SEQUENCE [LARGE SCALE MRNA]</scope>
</reference>
<reference key="2">
    <citation type="journal article" date="2005" name="Science">
        <title>The transcriptional landscape of the mammalian genome.</title>
        <authorList>
            <person name="Carninci P."/>
            <person name="Kasukawa T."/>
            <person name="Katayama S."/>
            <person name="Gough J."/>
            <person name="Frith M.C."/>
            <person name="Maeda N."/>
            <person name="Oyama R."/>
            <person name="Ravasi T."/>
            <person name="Lenhard B."/>
            <person name="Wells C."/>
            <person name="Kodzius R."/>
            <person name="Shimokawa K."/>
            <person name="Bajic V.B."/>
            <person name="Brenner S.E."/>
            <person name="Batalov S."/>
            <person name="Forrest A.R."/>
            <person name="Zavolan M."/>
            <person name="Davis M.J."/>
            <person name="Wilming L.G."/>
            <person name="Aidinis V."/>
            <person name="Allen J.E."/>
            <person name="Ambesi-Impiombato A."/>
            <person name="Apweiler R."/>
            <person name="Aturaliya R.N."/>
            <person name="Bailey T.L."/>
            <person name="Bansal M."/>
            <person name="Baxter L."/>
            <person name="Beisel K.W."/>
            <person name="Bersano T."/>
            <person name="Bono H."/>
            <person name="Chalk A.M."/>
            <person name="Chiu K.P."/>
            <person name="Choudhary V."/>
            <person name="Christoffels A."/>
            <person name="Clutterbuck D.R."/>
            <person name="Crowe M.L."/>
            <person name="Dalla E."/>
            <person name="Dalrymple B.P."/>
            <person name="de Bono B."/>
            <person name="Della Gatta G."/>
            <person name="di Bernardo D."/>
            <person name="Down T."/>
            <person name="Engstrom P."/>
            <person name="Fagiolini M."/>
            <person name="Faulkner G."/>
            <person name="Fletcher C.F."/>
            <person name="Fukushima T."/>
            <person name="Furuno M."/>
            <person name="Futaki S."/>
            <person name="Gariboldi M."/>
            <person name="Georgii-Hemming P."/>
            <person name="Gingeras T.R."/>
            <person name="Gojobori T."/>
            <person name="Green R.E."/>
            <person name="Gustincich S."/>
            <person name="Harbers M."/>
            <person name="Hayashi Y."/>
            <person name="Hensch T.K."/>
            <person name="Hirokawa N."/>
            <person name="Hill D."/>
            <person name="Huminiecki L."/>
            <person name="Iacono M."/>
            <person name="Ikeo K."/>
            <person name="Iwama A."/>
            <person name="Ishikawa T."/>
            <person name="Jakt M."/>
            <person name="Kanapin A."/>
            <person name="Katoh M."/>
            <person name="Kawasawa Y."/>
            <person name="Kelso J."/>
            <person name="Kitamura H."/>
            <person name="Kitano H."/>
            <person name="Kollias G."/>
            <person name="Krishnan S.P."/>
            <person name="Kruger A."/>
            <person name="Kummerfeld S.K."/>
            <person name="Kurochkin I.V."/>
            <person name="Lareau L.F."/>
            <person name="Lazarevic D."/>
            <person name="Lipovich L."/>
            <person name="Liu J."/>
            <person name="Liuni S."/>
            <person name="McWilliam S."/>
            <person name="Madan Babu M."/>
            <person name="Madera M."/>
            <person name="Marchionni L."/>
            <person name="Matsuda H."/>
            <person name="Matsuzawa S."/>
            <person name="Miki H."/>
            <person name="Mignone F."/>
            <person name="Miyake S."/>
            <person name="Morris K."/>
            <person name="Mottagui-Tabar S."/>
            <person name="Mulder N."/>
            <person name="Nakano N."/>
            <person name="Nakauchi H."/>
            <person name="Ng P."/>
            <person name="Nilsson R."/>
            <person name="Nishiguchi S."/>
            <person name="Nishikawa S."/>
            <person name="Nori F."/>
            <person name="Ohara O."/>
            <person name="Okazaki Y."/>
            <person name="Orlando V."/>
            <person name="Pang K.C."/>
            <person name="Pavan W.J."/>
            <person name="Pavesi G."/>
            <person name="Pesole G."/>
            <person name="Petrovsky N."/>
            <person name="Piazza S."/>
            <person name="Reed J."/>
            <person name="Reid J.F."/>
            <person name="Ring B.Z."/>
            <person name="Ringwald M."/>
            <person name="Rost B."/>
            <person name="Ruan Y."/>
            <person name="Salzberg S.L."/>
            <person name="Sandelin A."/>
            <person name="Schneider C."/>
            <person name="Schoenbach C."/>
            <person name="Sekiguchi K."/>
            <person name="Semple C.A."/>
            <person name="Seno S."/>
            <person name="Sessa L."/>
            <person name="Sheng Y."/>
            <person name="Shibata Y."/>
            <person name="Shimada H."/>
            <person name="Shimada K."/>
            <person name="Silva D."/>
            <person name="Sinclair B."/>
            <person name="Sperling S."/>
            <person name="Stupka E."/>
            <person name="Sugiura K."/>
            <person name="Sultana R."/>
            <person name="Takenaka Y."/>
            <person name="Taki K."/>
            <person name="Tammoja K."/>
            <person name="Tan S.L."/>
            <person name="Tang S."/>
            <person name="Taylor M.S."/>
            <person name="Tegner J."/>
            <person name="Teichmann S.A."/>
            <person name="Ueda H.R."/>
            <person name="van Nimwegen E."/>
            <person name="Verardo R."/>
            <person name="Wei C.L."/>
            <person name="Yagi K."/>
            <person name="Yamanishi H."/>
            <person name="Zabarovsky E."/>
            <person name="Zhu S."/>
            <person name="Zimmer A."/>
            <person name="Hide W."/>
            <person name="Bult C."/>
            <person name="Grimmond S.M."/>
            <person name="Teasdale R.D."/>
            <person name="Liu E.T."/>
            <person name="Brusic V."/>
            <person name="Quackenbush J."/>
            <person name="Wahlestedt C."/>
            <person name="Mattick J.S."/>
            <person name="Hume D.A."/>
            <person name="Kai C."/>
            <person name="Sasaki D."/>
            <person name="Tomaru Y."/>
            <person name="Fukuda S."/>
            <person name="Kanamori-Katayama M."/>
            <person name="Suzuki M."/>
            <person name="Aoki J."/>
            <person name="Arakawa T."/>
            <person name="Iida J."/>
            <person name="Imamura K."/>
            <person name="Itoh M."/>
            <person name="Kato T."/>
            <person name="Kawaji H."/>
            <person name="Kawagashira N."/>
            <person name="Kawashima T."/>
            <person name="Kojima M."/>
            <person name="Kondo S."/>
            <person name="Konno H."/>
            <person name="Nakano K."/>
            <person name="Ninomiya N."/>
            <person name="Nishio T."/>
            <person name="Okada M."/>
            <person name="Plessy C."/>
            <person name="Shibata K."/>
            <person name="Shiraki T."/>
            <person name="Suzuki S."/>
            <person name="Tagami M."/>
            <person name="Waki K."/>
            <person name="Watahiki A."/>
            <person name="Okamura-Oho Y."/>
            <person name="Suzuki H."/>
            <person name="Kawai J."/>
            <person name="Hayashizaki Y."/>
        </authorList>
    </citation>
    <scope>NUCLEOTIDE SEQUENCE [LARGE SCALE MRNA]</scope>
    <source>
        <strain>C57BL/6J</strain>
        <tissue>Retina</tissue>
    </source>
</reference>
<reference key="3">
    <citation type="journal article" date="2004" name="Genome Res.">
        <title>The status, quality, and expansion of the NIH full-length cDNA project: the Mammalian Gene Collection (MGC).</title>
        <authorList>
            <consortium name="The MGC Project Team"/>
        </authorList>
    </citation>
    <scope>NUCLEOTIDE SEQUENCE [LARGE SCALE MRNA]</scope>
    <source>
        <tissue>Eye</tissue>
    </source>
</reference>
<reference key="4">
    <citation type="journal article" date="2010" name="Cell">
        <title>A tissue-specific atlas of mouse protein phosphorylation and expression.</title>
        <authorList>
            <person name="Huttlin E.L."/>
            <person name="Jedrychowski M.P."/>
            <person name="Elias J.E."/>
            <person name="Goswami T."/>
            <person name="Rad R."/>
            <person name="Beausoleil S.A."/>
            <person name="Villen J."/>
            <person name="Haas W."/>
            <person name="Sowa M.E."/>
            <person name="Gygi S.P."/>
        </authorList>
    </citation>
    <scope>PHOSPHORYLATION [LARGE SCALE ANALYSIS] AT SER-465; SER-468; SER-475; SER-488; SER-757 AND SER-769</scope>
    <scope>IDENTIFICATION BY MASS SPECTROMETRY [LARGE SCALE ANALYSIS]</scope>
    <source>
        <tissue>Brain</tissue>
    </source>
</reference>
<reference key="5">
    <citation type="journal article" date="2014" name="Nat. Commun.">
        <title>SLC7A14 linked to autosomal recessive retinitis pigmentosa.</title>
        <authorList>
            <person name="Jin Z.B."/>
            <person name="Huang X.F."/>
            <person name="Lv J.N."/>
            <person name="Xiang L."/>
            <person name="Li D.Q."/>
            <person name="Chen J."/>
            <person name="Huang C."/>
            <person name="Wu J."/>
            <person name="Lu F."/>
            <person name="Qu J."/>
        </authorList>
    </citation>
    <scope>TISSUE SPECIFICITY</scope>
    <scope>DISRUPTION PHENOTYPE</scope>
</reference>
<reference key="6">
    <citation type="journal article" date="2023" name="Cell Rep.">
        <title>SLC7A14 imports GABA to lysosomes and impairs hepatic insulin sensitivity via inhibiting mTORC2.</title>
        <authorList>
            <person name="Jiang X."/>
            <person name="Liu K."/>
            <person name="Jiang H."/>
            <person name="Yin H."/>
            <person name="Wang E.D."/>
            <person name="Cheng H."/>
            <person name="Yuan F."/>
            <person name="Xiao F."/>
            <person name="Wang F."/>
            <person name="Lu W."/>
            <person name="Peng B."/>
            <person name="Shu Y."/>
            <person name="Li X."/>
            <person name="Chen S."/>
            <person name="Guo F."/>
        </authorList>
    </citation>
    <scope>FUNCTION</scope>
    <scope>TRANSPORTER ACTIVITY</scope>
    <scope>SUBCELLULAR LOCATION</scope>
    <scope>TISSUE SPECIFICITY</scope>
    <scope>INDUCTION</scope>
</reference>
<proteinExistence type="evidence at protein level"/>
<sequence length="771" mass="83984">MSGFLASLDPRRVQWGAAWYAMHSRILRTKPVESMLEGTGTTSAHGTKLAQVLTTVDLISLGVGSCVGTGMYVVSGLVAKEMAGPGVIVSFIIAAVASILSGVCYAEFGVRVPKTTGSAYTYSYVTVGEFVAFFIGWNLILEYLIGTAAGASALSSMFDSLANHSISRWMVDTVGTLNGLGKGEESYPDLLALVIAVIVTIIVALGVKNSVGFNNVLNVLNLAVWVFIMIAGLFFINGKYWAEGQFLPHGWSGVLQGAATCFYAFIGFDIIATTGEEAKNPNTSIPYAITASLVICLTAYVSVSMILTLMVPYYAIDTESPLMEMFVAHGFYAAKFVVAIGSVAGLTVSLLGSLFPMPRVIYAMAGDGLLFRFLAHVSSYTETPVVACIVSGFLAALLSLLVSLRDLIEMMSIGTLLAYTLVSVCVLLLRYQPESDIDGFVKFLSEEHTKKKEGILADCEKETCSPVSEGEEFSSPATNTCGAKNLPSLGDNEMLIGKSDKSAYNVNHPNYGTVDMTTGIEADESENIYLIKLKKLIGPRYYTMRIRLGLPGKMDRPTAATGHTVTICVLLLFILMFIFCSFIIFGSEYISGQSWWAILLVVLMMLLISVLVFVILQQPENPKKLPYMAPCLPFVPAFAMLVNIYLMLKLSTITWIRFAVWCFVGMLIYFGYGIWNSTLEISAREQALHQSTYQRYDVDDPFSVEEGFSYATEGESQEDWGGPAEDKGFYYQQMSDAKANSRTSSKAKSKSKHKQNSEALIANDELDCSPE</sequence>